<name>PURE_PSEAE</name>
<evidence type="ECO:0000255" key="1">
    <source>
        <dbReference type="HAMAP-Rule" id="MF_01929"/>
    </source>
</evidence>
<evidence type="ECO:0000305" key="2"/>
<protein>
    <recommendedName>
        <fullName evidence="1">N5-carboxyaminoimidazole ribonucleotide mutase</fullName>
        <shortName evidence="1">N5-CAIR mutase</shortName>
        <ecNumber evidence="1">5.4.99.18</ecNumber>
    </recommendedName>
    <alternativeName>
        <fullName evidence="1">5-(carboxyamino)imidazole ribonucleotide mutase</fullName>
    </alternativeName>
</protein>
<organism>
    <name type="scientific">Pseudomonas aeruginosa (strain ATCC 15692 / DSM 22644 / CIP 104116 / JCM 14847 / LMG 12228 / 1C / PRS 101 / PAO1)</name>
    <dbReference type="NCBI Taxonomy" id="208964"/>
    <lineage>
        <taxon>Bacteria</taxon>
        <taxon>Pseudomonadati</taxon>
        <taxon>Pseudomonadota</taxon>
        <taxon>Gammaproteobacteria</taxon>
        <taxon>Pseudomonadales</taxon>
        <taxon>Pseudomonadaceae</taxon>
        <taxon>Pseudomonas</taxon>
    </lineage>
</organism>
<feature type="chain" id="PRO_0000074978" description="N5-carboxyaminoimidazole ribonucleotide mutase">
    <location>
        <begin position="1"/>
        <end position="163"/>
    </location>
</feature>
<feature type="binding site" evidence="1">
    <location>
        <position position="11"/>
    </location>
    <ligand>
        <name>substrate</name>
    </ligand>
</feature>
<feature type="binding site" evidence="1">
    <location>
        <position position="14"/>
    </location>
    <ligand>
        <name>substrate</name>
    </ligand>
</feature>
<feature type="binding site" evidence="1">
    <location>
        <position position="41"/>
    </location>
    <ligand>
        <name>substrate</name>
    </ligand>
</feature>
<feature type="sequence conflict" description="In Ref. 1; AAB17257." evidence="2" ref="1">
    <original>L</original>
    <variation>F</variation>
    <location>
        <position position="46"/>
    </location>
</feature>
<feature type="sequence conflict" description="In Ref. 1; AAB17257." evidence="2" ref="1">
    <original>A</original>
    <variation>E</variation>
    <location>
        <position position="163"/>
    </location>
</feature>
<sequence>MSALVGVIMGSKSDWSTLSHTADMLDKLGIPYEVKVVSAHRTPDLLFQYAEEAEGRGLEVIIAGAGGAAHLPGMCAAKTHLPVLGVPVQSSMLSGVDSLLSIVQMPAGVPVATLAIGKAGAVNAALLSASILGAKHPQYHEALKQFRANQTETVLDNPDPRDA</sequence>
<comment type="function">
    <text evidence="1">Catalyzes the conversion of N5-carboxyaminoimidazole ribonucleotide (N5-CAIR) to 4-carboxy-5-aminoimidazole ribonucleotide (CAIR).</text>
</comment>
<comment type="catalytic activity">
    <reaction evidence="1">
        <text>5-carboxyamino-1-(5-phospho-D-ribosyl)imidazole + H(+) = 5-amino-1-(5-phospho-D-ribosyl)imidazole-4-carboxylate</text>
        <dbReference type="Rhea" id="RHEA:13193"/>
        <dbReference type="ChEBI" id="CHEBI:15378"/>
        <dbReference type="ChEBI" id="CHEBI:58730"/>
        <dbReference type="ChEBI" id="CHEBI:77657"/>
        <dbReference type="EC" id="5.4.99.18"/>
    </reaction>
</comment>
<comment type="pathway">
    <text evidence="1">Purine metabolism; IMP biosynthesis via de novo pathway; 5-amino-1-(5-phospho-D-ribosyl)imidazole-4-carboxylate from 5-amino-1-(5-phospho-D-ribosyl)imidazole (N5-CAIR route): step 2/2.</text>
</comment>
<comment type="similarity">
    <text evidence="1">Belongs to the AIR carboxylase family. Class I subfamily.</text>
</comment>
<reference key="1">
    <citation type="journal article" date="1996" name="Proc. Natl. Acad. Sci. U.S.A.">
        <title>Large-scale isolation of candidate virulence genes of Pseudomonas aeruginosa by in vivo selection.</title>
        <authorList>
            <person name="Wang J."/>
            <person name="Mushegian A."/>
            <person name="Lory S."/>
            <person name="Jin S."/>
        </authorList>
    </citation>
    <scope>NUCLEOTIDE SEQUENCE [GENOMIC DNA]</scope>
    <source>
        <strain>PAK</strain>
    </source>
</reference>
<reference key="2">
    <citation type="journal article" date="2000" name="Nature">
        <title>Complete genome sequence of Pseudomonas aeruginosa PAO1, an opportunistic pathogen.</title>
        <authorList>
            <person name="Stover C.K."/>
            <person name="Pham X.-Q.T."/>
            <person name="Erwin A.L."/>
            <person name="Mizoguchi S.D."/>
            <person name="Warrener P."/>
            <person name="Hickey M.J."/>
            <person name="Brinkman F.S.L."/>
            <person name="Hufnagle W.O."/>
            <person name="Kowalik D.J."/>
            <person name="Lagrou M."/>
            <person name="Garber R.L."/>
            <person name="Goltry L."/>
            <person name="Tolentino E."/>
            <person name="Westbrock-Wadman S."/>
            <person name="Yuan Y."/>
            <person name="Brody L.L."/>
            <person name="Coulter S.N."/>
            <person name="Folger K.R."/>
            <person name="Kas A."/>
            <person name="Larbig K."/>
            <person name="Lim R.M."/>
            <person name="Smith K.A."/>
            <person name="Spencer D.H."/>
            <person name="Wong G.K.-S."/>
            <person name="Wu Z."/>
            <person name="Paulsen I.T."/>
            <person name="Reizer J."/>
            <person name="Saier M.H. Jr."/>
            <person name="Hancock R.E.W."/>
            <person name="Lory S."/>
            <person name="Olson M.V."/>
        </authorList>
    </citation>
    <scope>NUCLEOTIDE SEQUENCE [LARGE SCALE GENOMIC DNA]</scope>
    <source>
        <strain>ATCC 15692 / DSM 22644 / CIP 104116 / JCM 14847 / LMG 12228 / 1C / PRS 101 / PAO1</strain>
    </source>
</reference>
<keyword id="KW-0413">Isomerase</keyword>
<keyword id="KW-0658">Purine biosynthesis</keyword>
<keyword id="KW-1185">Reference proteome</keyword>
<accession>P72157</accession>
<dbReference type="EC" id="5.4.99.18" evidence="1"/>
<dbReference type="EMBL" id="U58364">
    <property type="protein sequence ID" value="AAB17257.1"/>
    <property type="molecule type" value="Genomic_DNA"/>
</dbReference>
<dbReference type="EMBL" id="AE004091">
    <property type="protein sequence ID" value="AAG08811.1"/>
    <property type="molecule type" value="Genomic_DNA"/>
</dbReference>
<dbReference type="PIR" id="H82967">
    <property type="entry name" value="H82967"/>
</dbReference>
<dbReference type="RefSeq" id="NP_254113.1">
    <property type="nucleotide sequence ID" value="NC_002516.2"/>
</dbReference>
<dbReference type="RefSeq" id="WP_003106314.1">
    <property type="nucleotide sequence ID" value="NZ_QZGE01000012.1"/>
</dbReference>
<dbReference type="SMR" id="P72157"/>
<dbReference type="FunCoup" id="P72157">
    <property type="interactions" value="524"/>
</dbReference>
<dbReference type="STRING" id="208964.PA5426"/>
<dbReference type="PaxDb" id="208964-PA5426"/>
<dbReference type="DNASU" id="877624"/>
<dbReference type="GeneID" id="77223962"/>
<dbReference type="GeneID" id="877624"/>
<dbReference type="KEGG" id="pae:PA5426"/>
<dbReference type="PATRIC" id="fig|208964.12.peg.5686"/>
<dbReference type="PseudoCAP" id="PA5426"/>
<dbReference type="HOGENOM" id="CLU_094982_2_2_6"/>
<dbReference type="InParanoid" id="P72157"/>
<dbReference type="OrthoDB" id="9791908at2"/>
<dbReference type="PhylomeDB" id="P72157"/>
<dbReference type="BioCyc" id="PAER208964:G1FZ6-5553-MONOMER"/>
<dbReference type="UniPathway" id="UPA00074">
    <property type="reaction ID" value="UER00943"/>
</dbReference>
<dbReference type="Proteomes" id="UP000002438">
    <property type="component" value="Chromosome"/>
</dbReference>
<dbReference type="GO" id="GO:0034023">
    <property type="term" value="F:5-(carboxyamino)imidazole ribonucleotide mutase activity"/>
    <property type="evidence" value="ECO:0007669"/>
    <property type="project" value="UniProtKB-UniRule"/>
</dbReference>
<dbReference type="GO" id="GO:0006189">
    <property type="term" value="P:'de novo' IMP biosynthetic process"/>
    <property type="evidence" value="ECO:0007669"/>
    <property type="project" value="UniProtKB-UniRule"/>
</dbReference>
<dbReference type="Gene3D" id="3.40.50.1970">
    <property type="match status" value="1"/>
</dbReference>
<dbReference type="HAMAP" id="MF_01929">
    <property type="entry name" value="PurE_classI"/>
    <property type="match status" value="1"/>
</dbReference>
<dbReference type="InterPro" id="IPR033747">
    <property type="entry name" value="PurE_ClassI"/>
</dbReference>
<dbReference type="InterPro" id="IPR000031">
    <property type="entry name" value="PurE_dom"/>
</dbReference>
<dbReference type="InterPro" id="IPR024694">
    <property type="entry name" value="PurE_prokaryotes"/>
</dbReference>
<dbReference type="NCBIfam" id="TIGR01162">
    <property type="entry name" value="purE"/>
    <property type="match status" value="1"/>
</dbReference>
<dbReference type="PANTHER" id="PTHR23046:SF2">
    <property type="entry name" value="PHOSPHORIBOSYLAMINOIMIDAZOLE CARBOXYLASE"/>
    <property type="match status" value="1"/>
</dbReference>
<dbReference type="PANTHER" id="PTHR23046">
    <property type="entry name" value="PHOSPHORIBOSYLAMINOIMIDAZOLE CARBOXYLASE CATALYTIC SUBUNIT"/>
    <property type="match status" value="1"/>
</dbReference>
<dbReference type="Pfam" id="PF00731">
    <property type="entry name" value="AIRC"/>
    <property type="match status" value="1"/>
</dbReference>
<dbReference type="PIRSF" id="PIRSF001338">
    <property type="entry name" value="AIR_carboxylase"/>
    <property type="match status" value="1"/>
</dbReference>
<dbReference type="SMART" id="SM01001">
    <property type="entry name" value="AIRC"/>
    <property type="match status" value="1"/>
</dbReference>
<dbReference type="SUPFAM" id="SSF52255">
    <property type="entry name" value="N5-CAIR mutase (phosphoribosylaminoimidazole carboxylase, PurE)"/>
    <property type="match status" value="1"/>
</dbReference>
<proteinExistence type="inferred from homology"/>
<gene>
    <name evidence="1" type="primary">purE</name>
    <name type="ordered locus">PA5426</name>
</gene>